<keyword id="KW-0963">Cytoplasm</keyword>
<keyword id="KW-0251">Elongation factor</keyword>
<keyword id="KW-0648">Protein biosynthesis</keyword>
<name>EFTS_HELP2</name>
<proteinExistence type="inferred from homology"/>
<protein>
    <recommendedName>
        <fullName evidence="1">Elongation factor Ts</fullName>
        <shortName evidence="1">EF-Ts</shortName>
    </recommendedName>
</protein>
<comment type="function">
    <text evidence="1">Associates with the EF-Tu.GDP complex and induces the exchange of GDP to GTP. It remains bound to the aminoacyl-tRNA.EF-Tu.GTP complex up to the GTP hydrolysis stage on the ribosome.</text>
</comment>
<comment type="subcellular location">
    <subcellularLocation>
        <location evidence="1">Cytoplasm</location>
    </subcellularLocation>
</comment>
<comment type="similarity">
    <text evidence="1">Belongs to the EF-Ts family.</text>
</comment>
<organism>
    <name type="scientific">Helicobacter pylori (strain P12)</name>
    <dbReference type="NCBI Taxonomy" id="570508"/>
    <lineage>
        <taxon>Bacteria</taxon>
        <taxon>Pseudomonadati</taxon>
        <taxon>Campylobacterota</taxon>
        <taxon>Epsilonproteobacteria</taxon>
        <taxon>Campylobacterales</taxon>
        <taxon>Helicobacteraceae</taxon>
        <taxon>Helicobacter</taxon>
    </lineage>
</organism>
<evidence type="ECO:0000255" key="1">
    <source>
        <dbReference type="HAMAP-Rule" id="MF_00050"/>
    </source>
</evidence>
<dbReference type="EMBL" id="CP001217">
    <property type="protein sequence ID" value="ACJ08675.1"/>
    <property type="molecule type" value="Genomic_DNA"/>
</dbReference>
<dbReference type="SMR" id="B6JP47"/>
<dbReference type="KEGG" id="hpp:HPP12_1529"/>
<dbReference type="HOGENOM" id="CLU_047155_0_1_7"/>
<dbReference type="Proteomes" id="UP000008198">
    <property type="component" value="Chromosome"/>
</dbReference>
<dbReference type="GO" id="GO:0005737">
    <property type="term" value="C:cytoplasm"/>
    <property type="evidence" value="ECO:0007669"/>
    <property type="project" value="UniProtKB-SubCell"/>
</dbReference>
<dbReference type="GO" id="GO:0003746">
    <property type="term" value="F:translation elongation factor activity"/>
    <property type="evidence" value="ECO:0007669"/>
    <property type="project" value="UniProtKB-UniRule"/>
</dbReference>
<dbReference type="CDD" id="cd14275">
    <property type="entry name" value="UBA_EF-Ts"/>
    <property type="match status" value="1"/>
</dbReference>
<dbReference type="FunFam" id="1.10.286.20:FF:000004">
    <property type="entry name" value="Elongation factor Ts"/>
    <property type="match status" value="1"/>
</dbReference>
<dbReference type="FunFam" id="1.10.8.10:FF:000001">
    <property type="entry name" value="Elongation factor Ts"/>
    <property type="match status" value="1"/>
</dbReference>
<dbReference type="FunFam" id="3.30.479.20:FF:000029">
    <property type="entry name" value="Elongation factor Ts"/>
    <property type="match status" value="1"/>
</dbReference>
<dbReference type="Gene3D" id="1.10.286.20">
    <property type="match status" value="1"/>
</dbReference>
<dbReference type="Gene3D" id="1.10.8.10">
    <property type="entry name" value="DNA helicase RuvA subunit, C-terminal domain"/>
    <property type="match status" value="1"/>
</dbReference>
<dbReference type="Gene3D" id="3.30.479.20">
    <property type="entry name" value="Elongation factor Ts, dimerisation domain"/>
    <property type="match status" value="2"/>
</dbReference>
<dbReference type="HAMAP" id="MF_00050">
    <property type="entry name" value="EF_Ts"/>
    <property type="match status" value="1"/>
</dbReference>
<dbReference type="InterPro" id="IPR036402">
    <property type="entry name" value="EF-Ts_dimer_sf"/>
</dbReference>
<dbReference type="InterPro" id="IPR001816">
    <property type="entry name" value="Transl_elong_EFTs/EF1B"/>
</dbReference>
<dbReference type="InterPro" id="IPR014039">
    <property type="entry name" value="Transl_elong_EFTs/EF1B_dimer"/>
</dbReference>
<dbReference type="InterPro" id="IPR018101">
    <property type="entry name" value="Transl_elong_Ts_CS"/>
</dbReference>
<dbReference type="InterPro" id="IPR009060">
    <property type="entry name" value="UBA-like_sf"/>
</dbReference>
<dbReference type="NCBIfam" id="TIGR00116">
    <property type="entry name" value="tsf"/>
    <property type="match status" value="1"/>
</dbReference>
<dbReference type="PANTHER" id="PTHR11741">
    <property type="entry name" value="ELONGATION FACTOR TS"/>
    <property type="match status" value="1"/>
</dbReference>
<dbReference type="PANTHER" id="PTHR11741:SF0">
    <property type="entry name" value="ELONGATION FACTOR TS, MITOCHONDRIAL"/>
    <property type="match status" value="1"/>
</dbReference>
<dbReference type="Pfam" id="PF00889">
    <property type="entry name" value="EF_TS"/>
    <property type="match status" value="1"/>
</dbReference>
<dbReference type="SUPFAM" id="SSF54713">
    <property type="entry name" value="Elongation factor Ts (EF-Ts), dimerisation domain"/>
    <property type="match status" value="1"/>
</dbReference>
<dbReference type="SUPFAM" id="SSF46934">
    <property type="entry name" value="UBA-like"/>
    <property type="match status" value="1"/>
</dbReference>
<dbReference type="PROSITE" id="PS01126">
    <property type="entry name" value="EF_TS_1"/>
    <property type="match status" value="1"/>
</dbReference>
<dbReference type="PROSITE" id="PS01127">
    <property type="entry name" value="EF_TS_2"/>
    <property type="match status" value="1"/>
</dbReference>
<accession>B6JP47</accession>
<feature type="chain" id="PRO_1000116744" description="Elongation factor Ts">
    <location>
        <begin position="1"/>
        <end position="355"/>
    </location>
</feature>
<feature type="region of interest" description="Involved in Mg(2+) ion dislocation from EF-Tu" evidence="1">
    <location>
        <begin position="82"/>
        <end position="85"/>
    </location>
</feature>
<reference key="1">
    <citation type="submission" date="2008-10" db="EMBL/GenBank/DDBJ databases">
        <title>The complete genome sequence of Helicobacter pylori strain P12.</title>
        <authorList>
            <person name="Fischer W."/>
            <person name="Windhager L."/>
            <person name="Karnholz A."/>
            <person name="Zeiller M."/>
            <person name="Zimmer R."/>
            <person name="Haas R."/>
        </authorList>
    </citation>
    <scope>NUCLEOTIDE SEQUENCE [LARGE SCALE GENOMIC DNA]</scope>
    <source>
        <strain>P12</strain>
    </source>
</reference>
<gene>
    <name evidence="1" type="primary">tsf</name>
    <name type="ordered locus">HPP12_1529</name>
</gene>
<sequence length="355" mass="39766">MSGISAQLVKKLRDLTDAGMMDCKKALVEVAGDLQKAIDFLREKGLSKAAKKADRIAAEGVVALEVAPDFKSAMMVEINSETDFVAKNEGFKELVKKTLETIKAHNIHTPEELLKSPLDNKPFEEYLHSQIAVIGENILVRKIAHLKAPSSHIINGYAHSNARVGVLIGIKYNNEKNAPKVVELARNIAMHAAAMKPQVLDCKDFSLDFVKKETLALIAEIEKDNEEAKRLGKPLKNIPTFGSRIELSDEVLAHQKKAFENELKEQGKPEKIWDKIVPGKMERFIADNTLIDQRLTLLGQFYVMDDKKTIAQVVADCSKEWDDDLKITEYVRFELGEGIEKKAENFAEEVALQMK</sequence>